<dbReference type="EMBL" id="U64790">
    <property type="protein sequence ID" value="AAB39557.1"/>
    <property type="molecule type" value="Genomic_DNA"/>
</dbReference>
<dbReference type="PIR" id="T07587">
    <property type="entry name" value="T07587"/>
</dbReference>
<dbReference type="RefSeq" id="NP_001296190.1">
    <property type="nucleotide sequence ID" value="NM_001309261.1"/>
</dbReference>
<dbReference type="FunCoup" id="P93218">
    <property type="interactions" value="734"/>
</dbReference>
<dbReference type="STRING" id="4081.P93218"/>
<dbReference type="GlyCosmos" id="P93218">
    <property type="glycosylation" value="7 sites, No reported glycans"/>
</dbReference>
<dbReference type="PaxDb" id="4081-Solyc05g005540.2.1"/>
<dbReference type="GeneID" id="101251775"/>
<dbReference type="KEGG" id="sly:101251775"/>
<dbReference type="eggNOG" id="ENOG502QT2V">
    <property type="taxonomic scope" value="Eukaryota"/>
</dbReference>
<dbReference type="HOGENOM" id="CLU_011822_5_0_1"/>
<dbReference type="InParanoid" id="P93218"/>
<dbReference type="OrthoDB" id="773062at2759"/>
<dbReference type="PhylomeDB" id="P93218"/>
<dbReference type="Proteomes" id="UP000004994">
    <property type="component" value="Unplaced"/>
</dbReference>
<dbReference type="GO" id="GO:0048046">
    <property type="term" value="C:apoplast"/>
    <property type="evidence" value="ECO:0007669"/>
    <property type="project" value="UniProtKB-SubCell"/>
</dbReference>
<dbReference type="GO" id="GO:0071555">
    <property type="term" value="P:cell wall organization"/>
    <property type="evidence" value="ECO:0007669"/>
    <property type="project" value="UniProtKB-KW"/>
</dbReference>
<dbReference type="InterPro" id="IPR004873">
    <property type="entry name" value="BURP_dom"/>
</dbReference>
<dbReference type="InterPro" id="IPR051897">
    <property type="entry name" value="PG-associated_BURP"/>
</dbReference>
<dbReference type="PANTHER" id="PTHR31458">
    <property type="entry name" value="POLYGALACTURONASE 1 BETA-LIKE PROTEIN 2"/>
    <property type="match status" value="1"/>
</dbReference>
<dbReference type="PANTHER" id="PTHR31458:SF14">
    <property type="entry name" value="POLYGALACTURONASE NON-CATALYTIC SUBUNIT AROGP3"/>
    <property type="match status" value="1"/>
</dbReference>
<dbReference type="Pfam" id="PF03181">
    <property type="entry name" value="BURP"/>
    <property type="match status" value="1"/>
</dbReference>
<dbReference type="SMART" id="SM01045">
    <property type="entry name" value="BURP"/>
    <property type="match status" value="1"/>
</dbReference>
<dbReference type="PROSITE" id="PS51277">
    <property type="entry name" value="BURP"/>
    <property type="match status" value="1"/>
</dbReference>
<reference key="1">
    <citation type="submission" date="1996-07" db="EMBL/GenBank/DDBJ databases">
        <authorList>
            <person name="Watson C.F."/>
            <person name="Liu J."/>
            <person name="Schuchman D."/>
            <person name="Dellapenna D."/>
        </authorList>
    </citation>
    <scope>NUCLEOTIDE SEQUENCE [GENOMIC DNA]</scope>
    <source>
        <strain>cv. VFNT Cherry</strain>
    </source>
</reference>
<comment type="function">
    <text evidence="1">Non-catalytic subunit of polygalacturonase.</text>
</comment>
<comment type="subunit">
    <text evidence="1">Interacts with polygalacturonase to form heterodimers.</text>
</comment>
<comment type="subcellular location">
    <subcellularLocation>
        <location evidence="1">Secreted</location>
        <location evidence="1">Extracellular space</location>
        <location evidence="1">Apoplast</location>
    </subcellularLocation>
    <subcellularLocation>
        <location evidence="1">Secreted</location>
        <location evidence="1">Cell wall</location>
    </subcellularLocation>
    <text evidence="1">Associated to the cell wall.</text>
</comment>
<accession>P93218</accession>
<name>GP3_SOLLC</name>
<protein>
    <recommendedName>
        <fullName>Polygalacturonase non-catalytic subunit AroGP3</fullName>
    </recommendedName>
</protein>
<feature type="signal peptide" evidence="2">
    <location>
        <begin position="1"/>
        <end position="27"/>
    </location>
</feature>
<feature type="propeptide" id="PRO_0000042965" evidence="1">
    <location>
        <begin position="28"/>
        <end position="109"/>
    </location>
</feature>
<feature type="chain" id="PRO_0000042966" description="Polygalacturonase non-catalytic subunit AroGP3">
    <location>
        <begin position="110"/>
        <end status="unknown"/>
    </location>
</feature>
<feature type="propeptide" id="PRO_0000042967" evidence="1">
    <location>
        <begin status="unknown"/>
        <end position="632"/>
    </location>
</feature>
<feature type="domain" description="BURP" evidence="3">
    <location>
        <begin position="417"/>
        <end position="631"/>
    </location>
</feature>
<feature type="glycosylation site" description="N-linked (GlcNAc...) asparagine" evidence="2">
    <location>
        <position position="125"/>
    </location>
</feature>
<feature type="glycosylation site" description="N-linked (GlcNAc...) asparagine" evidence="2">
    <location>
        <position position="143"/>
    </location>
</feature>
<feature type="glycosylation site" description="N-linked (GlcNAc...) asparagine" evidence="2">
    <location>
        <position position="258"/>
    </location>
</feature>
<feature type="glycosylation site" description="N-linked (GlcNAc...) asparagine" evidence="2">
    <location>
        <position position="280"/>
    </location>
</feature>
<feature type="glycosylation site" description="N-linked (GlcNAc...) asparagine" evidence="2">
    <location>
        <position position="336"/>
    </location>
</feature>
<feature type="glycosylation site" description="N-linked (GlcNAc...) asparagine" evidence="2">
    <location>
        <position position="371"/>
    </location>
</feature>
<feature type="glycosylation site" description="N-linked (GlcNAc...) asparagine" evidence="2">
    <location>
        <position position="389"/>
    </location>
</feature>
<evidence type="ECO:0000250" key="1"/>
<evidence type="ECO:0000255" key="2"/>
<evidence type="ECO:0000255" key="3">
    <source>
        <dbReference type="PROSITE-ProRule" id="PRU00604"/>
    </source>
</evidence>
<keyword id="KW-0052">Apoplast</keyword>
<keyword id="KW-0134">Cell wall</keyword>
<keyword id="KW-0961">Cell wall biogenesis/degradation</keyword>
<keyword id="KW-0325">Glycoprotein</keyword>
<keyword id="KW-1185">Reference proteome</keyword>
<keyword id="KW-0964">Secreted</keyword>
<keyword id="KW-0732">Signal</keyword>
<gene>
    <name type="primary">GP3</name>
    <name type="synonym">AROGP3</name>
</gene>
<proteinExistence type="inferred from homology"/>
<sequence>MHTKILLPSCILLLLLFTLSSLDVVVAKDGDESGNPFTPKGYLIRYWNKHVSNDLPKPWFLLNKASPLNAAQYATYTKLVADQNAFTTHLQSFCSSANLMCALDLLPSLEKHKGDVHFVSYGDKNFTNYGTKESGLGFNSFKNYTEEENFPVNSFRRYGRDSPHDNQFDNYGAPGGNTPVQSFNSYSTNTPGGSGQFTNYAPGSNVPDLHFTSYSDHGTGGEQDFKSYGNDGNAGQQSFKSYGKDGNGADSQFTTYGNNTNVDGSDFTNYGEAANGENQNFTSYGFNGNNPASSFNNYGVGGNGPSEAFNSYRDQSNVGDDTFTTYVKDANGGEANFTNYGQSFNEGTDVFTTYGKGGNDPHINFKTYGVNNTFKDYVKDTATFSNYHNKTSQDLASLSEVNGGKKVNNRWIEPGKFFREKMLKSGTIMPMPDIKDKMPKRSFLPRAIAAKLPFSTSKIDELKKIFHAANDSQVAKMIGDALSECERAPSPGETKQCVNSAEDMIDFATSVLGRNVVVRTTENTNGSKGNIMIGSIKGINGGKVTKSVSCHQTLYPSLLYYCHSVPKVRVYEADILDPNSKAKINHGVAICHVDTSSWGPRHGAFVALGSGPGKIEVCHWIFENDMTWATAD</sequence>
<organism>
    <name type="scientific">Solanum lycopersicum</name>
    <name type="common">Tomato</name>
    <name type="synonym">Lycopersicon esculentum</name>
    <dbReference type="NCBI Taxonomy" id="4081"/>
    <lineage>
        <taxon>Eukaryota</taxon>
        <taxon>Viridiplantae</taxon>
        <taxon>Streptophyta</taxon>
        <taxon>Embryophyta</taxon>
        <taxon>Tracheophyta</taxon>
        <taxon>Spermatophyta</taxon>
        <taxon>Magnoliopsida</taxon>
        <taxon>eudicotyledons</taxon>
        <taxon>Gunneridae</taxon>
        <taxon>Pentapetalae</taxon>
        <taxon>asterids</taxon>
        <taxon>lamiids</taxon>
        <taxon>Solanales</taxon>
        <taxon>Solanaceae</taxon>
        <taxon>Solanoideae</taxon>
        <taxon>Solaneae</taxon>
        <taxon>Solanum</taxon>
        <taxon>Solanum subgen. Lycopersicon</taxon>
    </lineage>
</organism>